<evidence type="ECO:0000250" key="1"/>
<evidence type="ECO:0000250" key="2">
    <source>
        <dbReference type="UniProtKB" id="P09471"/>
    </source>
</evidence>
<evidence type="ECO:0000250" key="3">
    <source>
        <dbReference type="UniProtKB" id="P18872"/>
    </source>
</evidence>
<evidence type="ECO:0000255" key="4">
    <source>
        <dbReference type="PROSITE-ProRule" id="PRU01230"/>
    </source>
</evidence>
<evidence type="ECO:0000269" key="5">
    <source>
    </source>
</evidence>
<evidence type="ECO:0000305" key="6"/>
<dbReference type="EC" id="3.6.5.-" evidence="3"/>
<dbReference type="EMBL" id="M16116">
    <property type="protein sequence ID" value="AAA30530.1"/>
    <property type="molecule type" value="mRNA"/>
</dbReference>
<dbReference type="EMBL" id="X12924">
    <property type="protein sequence ID" value="CAA31391.1"/>
    <property type="molecule type" value="mRNA"/>
</dbReference>
<dbReference type="EMBL" id="BC142217">
    <property type="protein sequence ID" value="AAI42218.1"/>
    <property type="molecule type" value="mRNA"/>
</dbReference>
<dbReference type="EMBL" id="M14489">
    <property type="protein sequence ID" value="AAA30551.1"/>
    <property type="molecule type" value="mRNA"/>
</dbReference>
<dbReference type="PIR" id="S00213">
    <property type="entry name" value="RGBOO1"/>
</dbReference>
<dbReference type="RefSeq" id="NP_776750.2">
    <property type="nucleotide sequence ID" value="NM_174325.2"/>
</dbReference>
<dbReference type="SMR" id="P08239"/>
<dbReference type="BioGRID" id="159106">
    <property type="interactions" value="1"/>
</dbReference>
<dbReference type="FunCoup" id="P08239">
    <property type="interactions" value="1900"/>
</dbReference>
<dbReference type="STRING" id="9913.ENSBTAP00000033570"/>
<dbReference type="iPTMnet" id="P08239"/>
<dbReference type="SwissPalm" id="P08239"/>
<dbReference type="PaxDb" id="9913-ENSBTAP00000033570"/>
<dbReference type="Ensembl" id="ENSBTAT00000033660.5">
    <property type="protein sequence ID" value="ENSBTAP00000033570.5"/>
    <property type="gene ID" value="ENSBTAG00000003794.7"/>
</dbReference>
<dbReference type="GeneID" id="281792"/>
<dbReference type="KEGG" id="bta:281792"/>
<dbReference type="CTD" id="2775"/>
<dbReference type="VEuPathDB" id="HostDB:ENSBTAG00000003794"/>
<dbReference type="VGNC" id="VGNC:57047">
    <property type="gene designation" value="GNAO1"/>
</dbReference>
<dbReference type="eggNOG" id="KOG0082">
    <property type="taxonomic scope" value="Eukaryota"/>
</dbReference>
<dbReference type="GeneTree" id="ENSGT00940000155883"/>
<dbReference type="HOGENOM" id="CLU_014184_7_0_1"/>
<dbReference type="InParanoid" id="P08239"/>
<dbReference type="OrthoDB" id="5817230at2759"/>
<dbReference type="Reactome" id="R-BTA-4086398">
    <property type="pathway name" value="Ca2+ pathway"/>
</dbReference>
<dbReference type="Proteomes" id="UP000009136">
    <property type="component" value="Chromosome 18"/>
</dbReference>
<dbReference type="Bgee" id="ENSBTAG00000003794">
    <property type="expression patterns" value="Expressed in prefrontal cortex and 102 other cell types or tissues"/>
</dbReference>
<dbReference type="GO" id="GO:0005737">
    <property type="term" value="C:cytoplasm"/>
    <property type="evidence" value="ECO:0000318"/>
    <property type="project" value="GO_Central"/>
</dbReference>
<dbReference type="GO" id="GO:0005834">
    <property type="term" value="C:heterotrimeric G-protein complex"/>
    <property type="evidence" value="ECO:0000318"/>
    <property type="project" value="GO_Central"/>
</dbReference>
<dbReference type="GO" id="GO:0051430">
    <property type="term" value="F:corticotropin-releasing hormone receptor 1 binding"/>
    <property type="evidence" value="ECO:0000318"/>
    <property type="project" value="GO_Central"/>
</dbReference>
<dbReference type="GO" id="GO:0031821">
    <property type="term" value="F:G protein-coupled serotonin receptor binding"/>
    <property type="evidence" value="ECO:0000318"/>
    <property type="project" value="GO_Central"/>
</dbReference>
<dbReference type="GO" id="GO:0031683">
    <property type="term" value="F:G-protein beta/gamma-subunit complex binding"/>
    <property type="evidence" value="ECO:0000318"/>
    <property type="project" value="GO_Central"/>
</dbReference>
<dbReference type="GO" id="GO:0005525">
    <property type="term" value="F:GTP binding"/>
    <property type="evidence" value="ECO:0007669"/>
    <property type="project" value="UniProtKB-KW"/>
</dbReference>
<dbReference type="GO" id="GO:0003924">
    <property type="term" value="F:GTPase activity"/>
    <property type="evidence" value="ECO:0000318"/>
    <property type="project" value="GO_Central"/>
</dbReference>
<dbReference type="GO" id="GO:0046872">
    <property type="term" value="F:metal ion binding"/>
    <property type="evidence" value="ECO:0007669"/>
    <property type="project" value="UniProtKB-KW"/>
</dbReference>
<dbReference type="GO" id="GO:0031852">
    <property type="term" value="F:mu-type opioid receptor binding"/>
    <property type="evidence" value="ECO:0000318"/>
    <property type="project" value="GO_Central"/>
</dbReference>
<dbReference type="GO" id="GO:0007188">
    <property type="term" value="P:adenylate cyclase-modulating G protein-coupled receptor signaling pathway"/>
    <property type="evidence" value="ECO:0000318"/>
    <property type="project" value="GO_Central"/>
</dbReference>
<dbReference type="GO" id="GO:0007212">
    <property type="term" value="P:G protein-coupled dopamine receptor signaling pathway"/>
    <property type="evidence" value="ECO:0000318"/>
    <property type="project" value="GO_Central"/>
</dbReference>
<dbReference type="CDD" id="cd00066">
    <property type="entry name" value="G-alpha"/>
    <property type="match status" value="1"/>
</dbReference>
<dbReference type="FunFam" id="3.40.50.300:FF:003559">
    <property type="entry name" value="Guanine nucleotide-binding protein G(i) subunit alpha-1"/>
    <property type="match status" value="1"/>
</dbReference>
<dbReference type="FunFam" id="3.40.50.300:FF:002307">
    <property type="entry name" value="Guanine nucleotide-binding protein G(k) subunit alpha"/>
    <property type="match status" value="1"/>
</dbReference>
<dbReference type="FunFam" id="1.10.400.10:FF:000020">
    <property type="entry name" value="Guanine nucleotide-binding protein G(o) subunit alpha"/>
    <property type="match status" value="1"/>
</dbReference>
<dbReference type="Gene3D" id="1.10.400.10">
    <property type="entry name" value="GI Alpha 1, domain 2-like"/>
    <property type="match status" value="1"/>
</dbReference>
<dbReference type="Gene3D" id="3.40.50.300">
    <property type="entry name" value="P-loop containing nucleotide triphosphate hydrolases"/>
    <property type="match status" value="1"/>
</dbReference>
<dbReference type="InterPro" id="IPR001408">
    <property type="entry name" value="Gprotein_alpha_I"/>
</dbReference>
<dbReference type="InterPro" id="IPR001019">
    <property type="entry name" value="Gprotein_alpha_su"/>
</dbReference>
<dbReference type="InterPro" id="IPR011025">
    <property type="entry name" value="GproteinA_insert"/>
</dbReference>
<dbReference type="InterPro" id="IPR027417">
    <property type="entry name" value="P-loop_NTPase"/>
</dbReference>
<dbReference type="PANTHER" id="PTHR10218">
    <property type="entry name" value="GTP-BINDING PROTEIN ALPHA SUBUNIT"/>
    <property type="match status" value="1"/>
</dbReference>
<dbReference type="PANTHER" id="PTHR10218:SF361">
    <property type="entry name" value="GUANINE NUCLEOTIDE-BINDING PROTEIN G(O) SUBUNIT ALPHA"/>
    <property type="match status" value="1"/>
</dbReference>
<dbReference type="Pfam" id="PF00503">
    <property type="entry name" value="G-alpha"/>
    <property type="match status" value="1"/>
</dbReference>
<dbReference type="PRINTS" id="PR00318">
    <property type="entry name" value="GPROTEINA"/>
</dbReference>
<dbReference type="PRINTS" id="PR00441">
    <property type="entry name" value="GPROTEINAI"/>
</dbReference>
<dbReference type="SMART" id="SM00275">
    <property type="entry name" value="G_alpha"/>
    <property type="match status" value="1"/>
</dbReference>
<dbReference type="SUPFAM" id="SSF52540">
    <property type="entry name" value="P-loop containing nucleoside triphosphate hydrolases"/>
    <property type="match status" value="1"/>
</dbReference>
<dbReference type="SUPFAM" id="SSF47895">
    <property type="entry name" value="Transducin (alpha subunit), insertion domain"/>
    <property type="match status" value="1"/>
</dbReference>
<dbReference type="PROSITE" id="PS51882">
    <property type="entry name" value="G_ALPHA"/>
    <property type="match status" value="1"/>
</dbReference>
<feature type="initiator methionine" description="Removed" evidence="5">
    <location>
        <position position="1"/>
    </location>
</feature>
<feature type="chain" id="PRO_0000203699" description="Guanine nucleotide-binding protein G(o) subunit alpha">
    <location>
        <begin position="2"/>
        <end position="354"/>
    </location>
</feature>
<feature type="domain" description="G-alpha" evidence="4">
    <location>
        <begin position="32"/>
        <end position="354"/>
    </location>
</feature>
<feature type="region of interest" description="G1 motif" evidence="4">
    <location>
        <begin position="35"/>
        <end position="48"/>
    </location>
</feature>
<feature type="region of interest" description="G2 motif" evidence="4">
    <location>
        <begin position="174"/>
        <end position="182"/>
    </location>
</feature>
<feature type="region of interest" description="G3 motif" evidence="4">
    <location>
        <begin position="197"/>
        <end position="206"/>
    </location>
</feature>
<feature type="region of interest" description="G4 motif" evidence="4">
    <location>
        <begin position="266"/>
        <end position="273"/>
    </location>
</feature>
<feature type="region of interest" description="G5 motif" evidence="4">
    <location>
        <begin position="324"/>
        <end position="329"/>
    </location>
</feature>
<feature type="binding site" evidence="3">
    <location>
        <position position="43"/>
    </location>
    <ligand>
        <name>GTP</name>
        <dbReference type="ChEBI" id="CHEBI:37565"/>
    </ligand>
</feature>
<feature type="binding site" evidence="3">
    <location>
        <position position="46"/>
    </location>
    <ligand>
        <name>GTP</name>
        <dbReference type="ChEBI" id="CHEBI:37565"/>
    </ligand>
</feature>
<feature type="binding site" evidence="3">
    <location>
        <position position="47"/>
    </location>
    <ligand>
        <name>GTP</name>
        <dbReference type="ChEBI" id="CHEBI:37565"/>
    </ligand>
</feature>
<feature type="binding site" evidence="3">
    <location>
        <position position="47"/>
    </location>
    <ligand>
        <name>Mg(2+)</name>
        <dbReference type="ChEBI" id="CHEBI:18420"/>
    </ligand>
</feature>
<feature type="binding site" evidence="3">
    <location>
        <position position="48"/>
    </location>
    <ligand>
        <name>GTP</name>
        <dbReference type="ChEBI" id="CHEBI:37565"/>
    </ligand>
</feature>
<feature type="binding site" evidence="3">
    <location>
        <position position="152"/>
    </location>
    <ligand>
        <name>GTP</name>
        <dbReference type="ChEBI" id="CHEBI:37565"/>
    </ligand>
</feature>
<feature type="binding site" evidence="3">
    <location>
        <position position="176"/>
    </location>
    <ligand>
        <name>GTP</name>
        <dbReference type="ChEBI" id="CHEBI:37565"/>
    </ligand>
</feature>
<feature type="binding site" evidence="3">
    <location>
        <position position="177"/>
    </location>
    <ligand>
        <name>GTP</name>
        <dbReference type="ChEBI" id="CHEBI:37565"/>
    </ligand>
</feature>
<feature type="binding site" evidence="3">
    <location>
        <position position="178"/>
    </location>
    <ligand>
        <name>GTP</name>
        <dbReference type="ChEBI" id="CHEBI:37565"/>
    </ligand>
</feature>
<feature type="binding site" evidence="3">
    <location>
        <position position="179"/>
    </location>
    <ligand>
        <name>GTP</name>
        <dbReference type="ChEBI" id="CHEBI:37565"/>
    </ligand>
</feature>
<feature type="binding site" evidence="3">
    <location>
        <position position="182"/>
    </location>
    <ligand>
        <name>Mg(2+)</name>
        <dbReference type="ChEBI" id="CHEBI:18420"/>
    </ligand>
</feature>
<feature type="binding site" evidence="3">
    <location>
        <position position="270"/>
    </location>
    <ligand>
        <name>GTP</name>
        <dbReference type="ChEBI" id="CHEBI:37565"/>
    </ligand>
</feature>
<feature type="binding site" evidence="3">
    <location>
        <position position="273"/>
    </location>
    <ligand>
        <name>GTP</name>
        <dbReference type="ChEBI" id="CHEBI:37565"/>
    </ligand>
</feature>
<feature type="binding site" evidence="3">
    <location>
        <position position="325"/>
    </location>
    <ligand>
        <name>GTP</name>
        <dbReference type="ChEBI" id="CHEBI:37565"/>
    </ligand>
</feature>
<feature type="modified residue" description="5-glutamyl histamine" evidence="3">
    <location>
        <position position="205"/>
    </location>
</feature>
<feature type="lipid moiety-binding region" description="N-myristoyl glycine" evidence="5">
    <location>
        <position position="2"/>
    </location>
</feature>
<feature type="lipid moiety-binding region" description="S-palmitoyl cysteine" evidence="1">
    <location>
        <position position="3"/>
    </location>
</feature>
<feature type="lipid moiety-binding region" description="S-palmitoyl cysteine" evidence="3">
    <location>
        <position position="351"/>
    </location>
</feature>
<feature type="sequence conflict" description="In Ref. 2; CAA31391." evidence="6" ref="2">
    <original>S</original>
    <variation>F</variation>
    <location>
        <position position="253"/>
    </location>
</feature>
<feature type="sequence conflict" description="In Ref. 1; AAA30530." evidence="6" ref="1">
    <original>T</original>
    <variation>I</variation>
    <location>
        <position position="263"/>
    </location>
</feature>
<accession>P08239</accession>
<accession>A5PJS0</accession>
<sequence>MGCTLSAEERAALERSKAIEKNLKEDGISAAKDVKLLLLGAGESGKSTIVKQMKIIHEDGFSGEDVKQYKPVVYSNTIQSLAAIVRAMDTLGIEYGDKERKADAKMVCDVVSRMEDTEPFSPELLSAMMRLWGDSGIQECFNRSREYQLNDSAKYYLDSLDRIGAADYQPTEQDILRTRVKTTGIVETHFTFKNLHFRLFDVGGQRSERKKWIHCFEDVTAIIFCVALSGYDQVLHEDETTNRMHESLMLFDSICNNKFFIDTSIILFLNKKDLFGEKIKKSPLTICFPEYTGSNTYEDAAAYIQAQFESKNRSPNKEIYCHMTCATDTNNIQVVFDAVTDIIIANNLRGCGLY</sequence>
<protein>
    <recommendedName>
        <fullName>Guanine nucleotide-binding protein G(o) subunit alpha</fullName>
        <ecNumber evidence="3">3.6.5.-</ecNumber>
    </recommendedName>
    <alternativeName>
        <fullName>GTP-binding protein G39</fullName>
    </alternativeName>
</protein>
<gene>
    <name type="primary">GNAO1</name>
</gene>
<keyword id="KW-1003">Cell membrane</keyword>
<keyword id="KW-0903">Direct protein sequencing</keyword>
<keyword id="KW-0342">GTP-binding</keyword>
<keyword id="KW-0378">Hydrolase</keyword>
<keyword id="KW-0449">Lipoprotein</keyword>
<keyword id="KW-0460">Magnesium</keyword>
<keyword id="KW-0472">Membrane</keyword>
<keyword id="KW-0479">Metal-binding</keyword>
<keyword id="KW-0519">Myristate</keyword>
<keyword id="KW-0547">Nucleotide-binding</keyword>
<keyword id="KW-0564">Palmitate</keyword>
<keyword id="KW-1185">Reference proteome</keyword>
<keyword id="KW-0807">Transducer</keyword>
<organism>
    <name type="scientific">Bos taurus</name>
    <name type="common">Bovine</name>
    <dbReference type="NCBI Taxonomy" id="9913"/>
    <lineage>
        <taxon>Eukaryota</taxon>
        <taxon>Metazoa</taxon>
        <taxon>Chordata</taxon>
        <taxon>Craniata</taxon>
        <taxon>Vertebrata</taxon>
        <taxon>Euteleostomi</taxon>
        <taxon>Mammalia</taxon>
        <taxon>Eutheria</taxon>
        <taxon>Laurasiatheria</taxon>
        <taxon>Artiodactyla</taxon>
        <taxon>Ruminantia</taxon>
        <taxon>Pecora</taxon>
        <taxon>Bovidae</taxon>
        <taxon>Bovinae</taxon>
        <taxon>Bos</taxon>
    </lineage>
</organism>
<proteinExistence type="evidence at protein level"/>
<name>GNAO_BOVIN</name>
<reference key="1">
    <citation type="journal article" date="1987" name="Proc. Natl. Acad. Sci. U.S.A.">
        <title>Deduced amino acid sequence of bovine retinal Go alpha: similarities to other guanine nucleotide-binding proteins.</title>
        <authorList>
            <person name="van Meurs K.P."/>
            <person name="Angus C.W."/>
            <person name="Lavu S."/>
            <person name="Kung H.-F."/>
            <person name="Czarnecki S.K."/>
            <person name="Moss J."/>
            <person name="Vaughan M."/>
        </authorList>
    </citation>
    <scope>NUCLEOTIDE SEQUENCE [MRNA]</scope>
</reference>
<reference key="2">
    <citation type="journal article" date="1987" name="Dokl. Biochem.">
        <title>G39, GTP-binding protein from bovine cerebellum. Amino acid sequence and nucleotide sequence of the corresponding cDNA.</title>
        <authorList>
            <person name="Ovchinnikov Y.A."/>
            <person name="Slepak V.Z."/>
            <person name="Pronin A.N."/>
            <person name="Shlenskii A.B."/>
            <person name="Levina N.B."/>
            <person name="Voeikov V.L."/>
            <person name="Bystrov N.S."/>
            <person name="Severtsova I.V."/>
            <person name="Lipkin V.M."/>
        </authorList>
    </citation>
    <scope>NUCLEOTIDE SEQUENCE [MRNA]</scope>
    <scope>PARTIAL PROTEIN SEQUENCE</scope>
    <source>
        <tissue>Cerebellum</tissue>
    </source>
</reference>
<reference key="3">
    <citation type="journal article" date="1987" name="FEBS Lett.">
        <title>Primary structure of bovine cerebellum GTP-binding protein G39 and its effect on the adenylate cyclase system.</title>
        <authorList>
            <person name="Ovchinnikov Y.A."/>
            <person name="Slepak V.Z."/>
            <person name="Pronin A.N."/>
            <person name="Shlensky A.B."/>
            <person name="Levina N.B."/>
            <person name="Voeikov V.L."/>
            <person name="Lipkin V.M."/>
        </authorList>
    </citation>
    <scope>NUCLEOTIDE SEQUENCE [MRNA]</scope>
    <scope>PARTIAL PROTEIN SEQUENCE</scope>
    <source>
        <tissue>Cerebellum</tissue>
    </source>
</reference>
<reference key="4">
    <citation type="submission" date="2007-06" db="EMBL/GenBank/DDBJ databases">
        <authorList>
            <consortium name="NIH - Mammalian Gene Collection (MGC) project"/>
        </authorList>
    </citation>
    <scope>NUCLEOTIDE SEQUENCE [LARGE SCALE MRNA]</scope>
    <source>
        <strain>Hereford</strain>
        <tissue>Basal ganglia</tissue>
    </source>
</reference>
<reference key="5">
    <citation type="journal article" date="1986" name="Proc. Natl. Acad. Sci. U.S.A.">
        <title>Identification of the probable site of choleragen-catalyzed ADP-ribosylation in a Go alpha-like protein based on cDNA sequence.</title>
        <authorList>
            <person name="Angus C.W."/>
            <person name="van Meurs K.P."/>
            <person name="Tsai S.-C."/>
            <person name="Adamik R."/>
            <person name="Miedel M.C."/>
            <person name="Pan Y.-C.E."/>
            <person name="Kung H.-F."/>
            <person name="Moss J."/>
            <person name="Vaughan M."/>
        </authorList>
    </citation>
    <scope>NUCLEOTIDE SEQUENCE [MRNA] OF 146-206</scope>
</reference>
<reference key="6">
    <citation type="journal article" date="1987" name="Biochem. Biophys. Res. Commun.">
        <title>Hydroxylamine-stable covalent linkage of myristic acid in G0 alpha, a guanine nucleotide-binding protein of bovine brain.</title>
        <authorList>
            <person name="Schultz A.M."/>
            <person name="Tsai S.C."/>
            <person name="Kung H.F."/>
            <person name="Oroszlan S."/>
            <person name="Moss J."/>
            <person name="Vaughan M."/>
        </authorList>
    </citation>
    <scope>MYRISTOYLATION AT GLY-2</scope>
</reference>
<comment type="function">
    <text evidence="3">Guanine nucleotide-binding proteins (G proteins) function as transducers downstream of G protein-coupled receptors (GPCRs) in numerous signaling cascades. The alpha chain contains the guanine nucleotide binding site and alternates between an active, GTP-bound state and an inactive, GDP-bound state. Signaling by an activated GPCR promotes GDP release and GTP binding. The alpha subunit has a low GTPase activity that converts bound GTP to GDP, thereby terminating the signal. Both GDP release and GTP hydrolysis are modulated by numerous regulatory proteins. Signaling is mediated via effector proteins, such as adenylate cyclase. Inhibits adenylate cyclase activity, leading to decreased intracellular cAMP levels.</text>
</comment>
<comment type="catalytic activity">
    <reaction evidence="3">
        <text>GTP + H2O = GDP + phosphate + H(+)</text>
        <dbReference type="Rhea" id="RHEA:19669"/>
        <dbReference type="ChEBI" id="CHEBI:15377"/>
        <dbReference type="ChEBI" id="CHEBI:15378"/>
        <dbReference type="ChEBI" id="CHEBI:37565"/>
        <dbReference type="ChEBI" id="CHEBI:43474"/>
        <dbReference type="ChEBI" id="CHEBI:58189"/>
    </reaction>
    <physiologicalReaction direction="left-to-right" evidence="3">
        <dbReference type="Rhea" id="RHEA:19670"/>
    </physiologicalReaction>
</comment>
<comment type="activity regulation">
    <text evidence="3">The GTPase activity is promoted by GTPAse activators, such as RGS14, RGS16 and RGS19.</text>
</comment>
<comment type="subunit">
    <text evidence="2 3">G proteins are composed of 3 units; alpha, beta and gamma. The alpha chain contains the guanine nucleotide binding site. Forms a complex with GNB1 and GNG3 (By similarity). Interacts with RGS14. Interacts with RGS16 (By similarity). Interacts with RGS19 (By similarity). Interacts (when palmitoylated) with ADGRG3 (By similarity).</text>
</comment>
<comment type="subcellular location">
    <subcellularLocation>
        <location evidence="3">Cell membrane</location>
    </subcellularLocation>
    <subcellularLocation>
        <location evidence="2">Membrane</location>
        <topology evidence="2">Lipid-anchor</topology>
    </subcellularLocation>
</comment>
<comment type="PTM">
    <text evidence="3">Histaminylated at Gln-205 residues by TGM2.</text>
</comment>
<comment type="similarity">
    <text evidence="6">Belongs to the G-alpha family. G(i/o/t/z) subfamily.</text>
</comment>